<proteinExistence type="inferred from homology"/>
<sequence>MLVPKRVKYRREFRGNMRGRAKGGTEVAFGEYGLQAVEASWITNRQIEAARIAMTRYMKRGGKVWIKIFPHKSYTSKPIGVRMGKGKGAPEGWVSPVKRGKIMFEIAGVPEDVAREALRLAAHKLPVKTKIVKREEIGGEANES</sequence>
<reference key="1">
    <citation type="journal article" date="2001" name="Science">
        <title>Comparative genomics of Listeria species.</title>
        <authorList>
            <person name="Glaser P."/>
            <person name="Frangeul L."/>
            <person name="Buchrieser C."/>
            <person name="Rusniok C."/>
            <person name="Amend A."/>
            <person name="Baquero F."/>
            <person name="Berche P."/>
            <person name="Bloecker H."/>
            <person name="Brandt P."/>
            <person name="Chakraborty T."/>
            <person name="Charbit A."/>
            <person name="Chetouani F."/>
            <person name="Couve E."/>
            <person name="de Daruvar A."/>
            <person name="Dehoux P."/>
            <person name="Domann E."/>
            <person name="Dominguez-Bernal G."/>
            <person name="Duchaud E."/>
            <person name="Durant L."/>
            <person name="Dussurget O."/>
            <person name="Entian K.-D."/>
            <person name="Fsihi H."/>
            <person name="Garcia-del Portillo F."/>
            <person name="Garrido P."/>
            <person name="Gautier L."/>
            <person name="Goebel W."/>
            <person name="Gomez-Lopez N."/>
            <person name="Hain T."/>
            <person name="Hauf J."/>
            <person name="Jackson D."/>
            <person name="Jones L.-M."/>
            <person name="Kaerst U."/>
            <person name="Kreft J."/>
            <person name="Kuhn M."/>
            <person name="Kunst F."/>
            <person name="Kurapkat G."/>
            <person name="Madueno E."/>
            <person name="Maitournam A."/>
            <person name="Mata Vicente J."/>
            <person name="Ng E."/>
            <person name="Nedjari H."/>
            <person name="Nordsiek G."/>
            <person name="Novella S."/>
            <person name="de Pablos B."/>
            <person name="Perez-Diaz J.-C."/>
            <person name="Purcell R."/>
            <person name="Remmel B."/>
            <person name="Rose M."/>
            <person name="Schlueter T."/>
            <person name="Simoes N."/>
            <person name="Tierrez A."/>
            <person name="Vazquez-Boland J.-A."/>
            <person name="Voss H."/>
            <person name="Wehland J."/>
            <person name="Cossart P."/>
        </authorList>
    </citation>
    <scope>NUCLEOTIDE SEQUENCE [LARGE SCALE GENOMIC DNA]</scope>
    <source>
        <strain>ATCC BAA-680 / CLIP 11262</strain>
    </source>
</reference>
<feature type="chain" id="PRO_0000062129" description="Large ribosomal subunit protein uL16">
    <location>
        <begin position="1"/>
        <end position="144"/>
    </location>
</feature>
<dbReference type="EMBL" id="AL596173">
    <property type="protein sequence ID" value="CAC98000.1"/>
    <property type="molecule type" value="Genomic_DNA"/>
</dbReference>
<dbReference type="RefSeq" id="WP_003720943.1">
    <property type="nucleotide sequence ID" value="NC_003212.1"/>
</dbReference>
<dbReference type="SMR" id="Q7ANU4"/>
<dbReference type="STRING" id="272626.gene:17567161"/>
<dbReference type="GeneID" id="93240506"/>
<dbReference type="KEGG" id="lin:rplP"/>
<dbReference type="eggNOG" id="COG0197">
    <property type="taxonomic scope" value="Bacteria"/>
</dbReference>
<dbReference type="HOGENOM" id="CLU_078858_2_1_9"/>
<dbReference type="OrthoDB" id="9802589at2"/>
<dbReference type="Proteomes" id="UP000002513">
    <property type="component" value="Chromosome"/>
</dbReference>
<dbReference type="GO" id="GO:0022625">
    <property type="term" value="C:cytosolic large ribosomal subunit"/>
    <property type="evidence" value="ECO:0007669"/>
    <property type="project" value="TreeGrafter"/>
</dbReference>
<dbReference type="GO" id="GO:0019843">
    <property type="term" value="F:rRNA binding"/>
    <property type="evidence" value="ECO:0007669"/>
    <property type="project" value="UniProtKB-UniRule"/>
</dbReference>
<dbReference type="GO" id="GO:0003735">
    <property type="term" value="F:structural constituent of ribosome"/>
    <property type="evidence" value="ECO:0007669"/>
    <property type="project" value="InterPro"/>
</dbReference>
<dbReference type="GO" id="GO:0000049">
    <property type="term" value="F:tRNA binding"/>
    <property type="evidence" value="ECO:0007669"/>
    <property type="project" value="UniProtKB-KW"/>
</dbReference>
<dbReference type="GO" id="GO:0006412">
    <property type="term" value="P:translation"/>
    <property type="evidence" value="ECO:0007669"/>
    <property type="project" value="UniProtKB-UniRule"/>
</dbReference>
<dbReference type="CDD" id="cd01433">
    <property type="entry name" value="Ribosomal_L16_L10e"/>
    <property type="match status" value="1"/>
</dbReference>
<dbReference type="FunFam" id="3.90.1170.10:FF:000001">
    <property type="entry name" value="50S ribosomal protein L16"/>
    <property type="match status" value="1"/>
</dbReference>
<dbReference type="Gene3D" id="3.90.1170.10">
    <property type="entry name" value="Ribosomal protein L10e/L16"/>
    <property type="match status" value="1"/>
</dbReference>
<dbReference type="HAMAP" id="MF_01342">
    <property type="entry name" value="Ribosomal_uL16"/>
    <property type="match status" value="1"/>
</dbReference>
<dbReference type="InterPro" id="IPR047873">
    <property type="entry name" value="Ribosomal_uL16"/>
</dbReference>
<dbReference type="InterPro" id="IPR000114">
    <property type="entry name" value="Ribosomal_uL16_bact-type"/>
</dbReference>
<dbReference type="InterPro" id="IPR020798">
    <property type="entry name" value="Ribosomal_uL16_CS"/>
</dbReference>
<dbReference type="InterPro" id="IPR016180">
    <property type="entry name" value="Ribosomal_uL16_dom"/>
</dbReference>
<dbReference type="InterPro" id="IPR036920">
    <property type="entry name" value="Ribosomal_uL16_sf"/>
</dbReference>
<dbReference type="NCBIfam" id="TIGR01164">
    <property type="entry name" value="rplP_bact"/>
    <property type="match status" value="1"/>
</dbReference>
<dbReference type="PANTHER" id="PTHR12220">
    <property type="entry name" value="50S/60S RIBOSOMAL PROTEIN L16"/>
    <property type="match status" value="1"/>
</dbReference>
<dbReference type="PANTHER" id="PTHR12220:SF13">
    <property type="entry name" value="LARGE RIBOSOMAL SUBUNIT PROTEIN UL16M"/>
    <property type="match status" value="1"/>
</dbReference>
<dbReference type="Pfam" id="PF00252">
    <property type="entry name" value="Ribosomal_L16"/>
    <property type="match status" value="1"/>
</dbReference>
<dbReference type="PRINTS" id="PR00060">
    <property type="entry name" value="RIBOSOMALL16"/>
</dbReference>
<dbReference type="SUPFAM" id="SSF54686">
    <property type="entry name" value="Ribosomal protein L16p/L10e"/>
    <property type="match status" value="1"/>
</dbReference>
<dbReference type="PROSITE" id="PS00586">
    <property type="entry name" value="RIBOSOMAL_L16_1"/>
    <property type="match status" value="1"/>
</dbReference>
<dbReference type="PROSITE" id="PS00701">
    <property type="entry name" value="RIBOSOMAL_L16_2"/>
    <property type="match status" value="1"/>
</dbReference>
<organism>
    <name type="scientific">Listeria innocua serovar 6a (strain ATCC BAA-680 / CLIP 11262)</name>
    <dbReference type="NCBI Taxonomy" id="272626"/>
    <lineage>
        <taxon>Bacteria</taxon>
        <taxon>Bacillati</taxon>
        <taxon>Bacillota</taxon>
        <taxon>Bacilli</taxon>
        <taxon>Bacillales</taxon>
        <taxon>Listeriaceae</taxon>
        <taxon>Listeria</taxon>
    </lineage>
</organism>
<accession>Q7ANU4</accession>
<protein>
    <recommendedName>
        <fullName evidence="1">Large ribosomal subunit protein uL16</fullName>
    </recommendedName>
    <alternativeName>
        <fullName evidence="2">50S ribosomal protein L16</fullName>
    </alternativeName>
</protein>
<comment type="function">
    <text evidence="1">Binds 23S rRNA and is also seen to make contacts with the A and possibly P site tRNAs.</text>
</comment>
<comment type="subunit">
    <text evidence="1">Part of the 50S ribosomal subunit.</text>
</comment>
<comment type="similarity">
    <text evidence="1">Belongs to the universal ribosomal protein uL16 family.</text>
</comment>
<name>RL16_LISIN</name>
<keyword id="KW-0687">Ribonucleoprotein</keyword>
<keyword id="KW-0689">Ribosomal protein</keyword>
<keyword id="KW-0694">RNA-binding</keyword>
<keyword id="KW-0699">rRNA-binding</keyword>
<keyword id="KW-0820">tRNA-binding</keyword>
<gene>
    <name evidence="1" type="primary">rplP</name>
    <name type="ordered locus">lin2774</name>
</gene>
<evidence type="ECO:0000255" key="1">
    <source>
        <dbReference type="HAMAP-Rule" id="MF_01342"/>
    </source>
</evidence>
<evidence type="ECO:0000305" key="2"/>